<dbReference type="EC" id="6.3.4.21" evidence="1"/>
<dbReference type="EMBL" id="CP000539">
    <property type="protein sequence ID" value="ABM42653.1"/>
    <property type="molecule type" value="Genomic_DNA"/>
</dbReference>
<dbReference type="SMR" id="A1W8S8"/>
<dbReference type="STRING" id="232721.Ajs_2492"/>
<dbReference type="KEGG" id="ajs:Ajs_2492"/>
<dbReference type="eggNOG" id="COG1488">
    <property type="taxonomic scope" value="Bacteria"/>
</dbReference>
<dbReference type="HOGENOM" id="CLU_030991_1_0_4"/>
<dbReference type="UniPathway" id="UPA00253">
    <property type="reaction ID" value="UER00457"/>
</dbReference>
<dbReference type="Proteomes" id="UP000000645">
    <property type="component" value="Chromosome"/>
</dbReference>
<dbReference type="GO" id="GO:0005829">
    <property type="term" value="C:cytosol"/>
    <property type="evidence" value="ECO:0007669"/>
    <property type="project" value="TreeGrafter"/>
</dbReference>
<dbReference type="GO" id="GO:0004516">
    <property type="term" value="F:nicotinate phosphoribosyltransferase activity"/>
    <property type="evidence" value="ECO:0007669"/>
    <property type="project" value="UniProtKB-UniRule"/>
</dbReference>
<dbReference type="GO" id="GO:0034355">
    <property type="term" value="P:NAD biosynthetic process via the salvage pathway"/>
    <property type="evidence" value="ECO:0007669"/>
    <property type="project" value="TreeGrafter"/>
</dbReference>
<dbReference type="CDD" id="cd01401">
    <property type="entry name" value="PncB_like"/>
    <property type="match status" value="1"/>
</dbReference>
<dbReference type="Gene3D" id="3.20.140.10">
    <property type="entry name" value="nicotinate phosphoribosyltransferase"/>
    <property type="match status" value="1"/>
</dbReference>
<dbReference type="HAMAP" id="MF_00570">
    <property type="entry name" value="NAPRTase"/>
    <property type="match status" value="1"/>
</dbReference>
<dbReference type="InterPro" id="IPR041525">
    <property type="entry name" value="N/Namide_PRibTrfase"/>
</dbReference>
<dbReference type="InterPro" id="IPR040727">
    <property type="entry name" value="NAPRTase_N"/>
</dbReference>
<dbReference type="InterPro" id="IPR006406">
    <property type="entry name" value="Nic_PRibTrfase"/>
</dbReference>
<dbReference type="InterPro" id="IPR007229">
    <property type="entry name" value="Nic_PRibTrfase-Fam"/>
</dbReference>
<dbReference type="InterPro" id="IPR036068">
    <property type="entry name" value="Nicotinate_pribotase-like_C"/>
</dbReference>
<dbReference type="NCBIfam" id="TIGR01514">
    <property type="entry name" value="NAPRTase"/>
    <property type="match status" value="1"/>
</dbReference>
<dbReference type="NCBIfam" id="NF003704">
    <property type="entry name" value="PRK05321.1"/>
    <property type="match status" value="1"/>
</dbReference>
<dbReference type="PANTHER" id="PTHR11098">
    <property type="entry name" value="NICOTINATE PHOSPHORIBOSYLTRANSFERASE"/>
    <property type="match status" value="1"/>
</dbReference>
<dbReference type="PANTHER" id="PTHR11098:SF1">
    <property type="entry name" value="NICOTINATE PHOSPHORIBOSYLTRANSFERASE"/>
    <property type="match status" value="1"/>
</dbReference>
<dbReference type="Pfam" id="PF04095">
    <property type="entry name" value="NAPRTase"/>
    <property type="match status" value="1"/>
</dbReference>
<dbReference type="Pfam" id="PF17767">
    <property type="entry name" value="NAPRTase_N"/>
    <property type="match status" value="1"/>
</dbReference>
<dbReference type="PIRSF" id="PIRSF000484">
    <property type="entry name" value="NAPRT"/>
    <property type="match status" value="1"/>
</dbReference>
<dbReference type="SUPFAM" id="SSF51690">
    <property type="entry name" value="Nicotinate/Quinolinate PRTase C-terminal domain-like"/>
    <property type="match status" value="1"/>
</dbReference>
<dbReference type="SUPFAM" id="SSF54675">
    <property type="entry name" value="Nicotinate/Quinolinate PRTase N-terminal domain-like"/>
    <property type="match status" value="1"/>
</dbReference>
<comment type="function">
    <text evidence="1">Catalyzes the synthesis of beta-nicotinate D-ribonucleotide from nicotinate and 5-phospho-D-ribose 1-phosphate at the expense of ATP.</text>
</comment>
<comment type="catalytic activity">
    <reaction evidence="1">
        <text>nicotinate + 5-phospho-alpha-D-ribose 1-diphosphate + ATP + H2O = nicotinate beta-D-ribonucleotide + ADP + phosphate + diphosphate</text>
        <dbReference type="Rhea" id="RHEA:36163"/>
        <dbReference type="ChEBI" id="CHEBI:15377"/>
        <dbReference type="ChEBI" id="CHEBI:30616"/>
        <dbReference type="ChEBI" id="CHEBI:32544"/>
        <dbReference type="ChEBI" id="CHEBI:33019"/>
        <dbReference type="ChEBI" id="CHEBI:43474"/>
        <dbReference type="ChEBI" id="CHEBI:57502"/>
        <dbReference type="ChEBI" id="CHEBI:58017"/>
        <dbReference type="ChEBI" id="CHEBI:456216"/>
        <dbReference type="EC" id="6.3.4.21"/>
    </reaction>
</comment>
<comment type="pathway">
    <text evidence="1">Cofactor biosynthesis; NAD(+) biosynthesis; nicotinate D-ribonucleotide from nicotinate: step 1/1.</text>
</comment>
<comment type="PTM">
    <text evidence="1">Transiently phosphorylated on a His residue during the reaction cycle. Phosphorylation strongly increases the affinity for substrates and increases the rate of nicotinate D-ribonucleotide production. Dephosphorylation regenerates the low-affinity form of the enzyme, leading to product release.</text>
</comment>
<comment type="similarity">
    <text evidence="1">Belongs to the NAPRTase family.</text>
</comment>
<organism>
    <name type="scientific">Acidovorax sp. (strain JS42)</name>
    <dbReference type="NCBI Taxonomy" id="232721"/>
    <lineage>
        <taxon>Bacteria</taxon>
        <taxon>Pseudomonadati</taxon>
        <taxon>Pseudomonadota</taxon>
        <taxon>Betaproteobacteria</taxon>
        <taxon>Burkholderiales</taxon>
        <taxon>Comamonadaceae</taxon>
        <taxon>Acidovorax</taxon>
    </lineage>
</organism>
<name>PNCB_ACISJ</name>
<protein>
    <recommendedName>
        <fullName evidence="1">Nicotinate phosphoribosyltransferase</fullName>
        <shortName evidence="1">NAPRTase</shortName>
        <ecNumber evidence="1">6.3.4.21</ecNumber>
    </recommendedName>
</protein>
<sequence length="398" mass="45542">MIITSLLDTDLYKFTMMQVVLHQFPGAQVEYRFKCRNPGVELAPFVSEIRDEIRALCSLQFQDAELAYLRSLRFIKSDFVDFLGLFRLNEKYIRVSALPSGEIDITITGPWLHTILFEIPVLAIVNEVYFRNTQKVPDFPEGRRRLEAKIGQLQQPGLDSLKIADYGTRRRFSRAWHEEVLRVLCVRLGSDDRRGAPGQFAGTSNVLYAMKLGVTPLGTMAHEYLQACQSLGPRLRDSQVFGFEMWAKEYRGDLGIALSDVYGMSAFLRDFDLYFCKLFDGARHDSGDPFAWGERLLQHYRDNRVDPLTKTLIFSDALTVPRIIELYQRFNGRCQLAFGIGTNLTNDLGYEPLQIVIKMTRCNGQPVAKLSDAPGKNMCNDEKYLAYLRQVFEIPSPQ</sequence>
<evidence type="ECO:0000255" key="1">
    <source>
        <dbReference type="HAMAP-Rule" id="MF_00570"/>
    </source>
</evidence>
<gene>
    <name evidence="1" type="primary">pncB</name>
    <name type="ordered locus">Ajs_2492</name>
</gene>
<accession>A1W8S8</accession>
<proteinExistence type="inferred from homology"/>
<feature type="chain" id="PRO_1000129460" description="Nicotinate phosphoribosyltransferase">
    <location>
        <begin position="1"/>
        <end position="398"/>
    </location>
</feature>
<feature type="modified residue" description="Phosphohistidine; by autocatalysis" evidence="1">
    <location>
        <position position="222"/>
    </location>
</feature>
<keyword id="KW-0436">Ligase</keyword>
<keyword id="KW-0597">Phosphoprotein</keyword>
<keyword id="KW-0662">Pyridine nucleotide biosynthesis</keyword>
<reference key="1">
    <citation type="submission" date="2006-12" db="EMBL/GenBank/DDBJ databases">
        <title>Complete sequence of chromosome 1 of Acidovorax sp. JS42.</title>
        <authorList>
            <person name="Copeland A."/>
            <person name="Lucas S."/>
            <person name="Lapidus A."/>
            <person name="Barry K."/>
            <person name="Detter J.C."/>
            <person name="Glavina del Rio T."/>
            <person name="Dalin E."/>
            <person name="Tice H."/>
            <person name="Pitluck S."/>
            <person name="Chertkov O."/>
            <person name="Brettin T."/>
            <person name="Bruce D."/>
            <person name="Han C."/>
            <person name="Tapia R."/>
            <person name="Gilna P."/>
            <person name="Schmutz J."/>
            <person name="Larimer F."/>
            <person name="Land M."/>
            <person name="Hauser L."/>
            <person name="Kyrpides N."/>
            <person name="Kim E."/>
            <person name="Stahl D."/>
            <person name="Richardson P."/>
        </authorList>
    </citation>
    <scope>NUCLEOTIDE SEQUENCE [LARGE SCALE GENOMIC DNA]</scope>
    <source>
        <strain>JS42</strain>
    </source>
</reference>